<evidence type="ECO:0000250" key="1"/>
<evidence type="ECO:0000250" key="2">
    <source>
        <dbReference type="UniProtKB" id="P02818"/>
    </source>
</evidence>
<evidence type="ECO:0000250" key="3">
    <source>
        <dbReference type="UniProtKB" id="P02820"/>
    </source>
</evidence>
<evidence type="ECO:0000250" key="4">
    <source>
        <dbReference type="UniProtKB" id="P83489"/>
    </source>
</evidence>
<evidence type="ECO:0000250" key="5">
    <source>
        <dbReference type="UniProtKB" id="P86546"/>
    </source>
</evidence>
<evidence type="ECO:0000255" key="6">
    <source>
        <dbReference type="PROSITE-ProRule" id="PRU00463"/>
    </source>
</evidence>
<evidence type="ECO:0000305" key="7"/>
<name>OSTCN_MACNE</name>
<gene>
    <name type="primary">BGLAP</name>
</gene>
<reference key="1">
    <citation type="submission" date="2006-08" db="EMBL/GenBank/DDBJ databases">
        <title>Positive selection in transcription factor genes on the human lineage.</title>
        <authorList>
            <person name="Nickel G.C."/>
            <person name="Tefft D.L."/>
            <person name="Trevarthen K."/>
            <person name="Funt J."/>
            <person name="Adams M.D."/>
        </authorList>
    </citation>
    <scope>NUCLEOTIDE SEQUENCE [GENOMIC DNA]</scope>
</reference>
<organism>
    <name type="scientific">Macaca nemestrina</name>
    <name type="common">Pig-tailed macaque</name>
    <dbReference type="NCBI Taxonomy" id="9545"/>
    <lineage>
        <taxon>Eukaryota</taxon>
        <taxon>Metazoa</taxon>
        <taxon>Chordata</taxon>
        <taxon>Craniata</taxon>
        <taxon>Vertebrata</taxon>
        <taxon>Euteleostomi</taxon>
        <taxon>Mammalia</taxon>
        <taxon>Eutheria</taxon>
        <taxon>Euarchontoglires</taxon>
        <taxon>Primates</taxon>
        <taxon>Haplorrhini</taxon>
        <taxon>Catarrhini</taxon>
        <taxon>Cercopithecidae</taxon>
        <taxon>Cercopithecinae</taxon>
        <taxon>Macaca</taxon>
    </lineage>
</organism>
<proteinExistence type="inferred from homology"/>
<protein>
    <recommendedName>
        <fullName>Osteocalcin</fullName>
    </recommendedName>
    <alternativeName>
        <fullName>Bone Gla protein</fullName>
        <shortName>BGP</shortName>
    </alternativeName>
    <alternativeName>
        <fullName>Gamma-carboxyglutamic acid-containing protein</fullName>
    </alternativeName>
</protein>
<keyword id="KW-0091">Biomineralization</keyword>
<keyword id="KW-0106">Calcium</keyword>
<keyword id="KW-0165">Cleavage on pair of basic residues</keyword>
<keyword id="KW-1015">Disulfide bond</keyword>
<keyword id="KW-0301">Gamma-carboxyglutamic acid</keyword>
<keyword id="KW-0372">Hormone</keyword>
<keyword id="KW-0379">Hydroxylation</keyword>
<keyword id="KW-0479">Metal-binding</keyword>
<keyword id="KW-1185">Reference proteome</keyword>
<keyword id="KW-0964">Secreted</keyword>
<keyword id="KW-0732">Signal</keyword>
<comment type="function">
    <text evidence="5">The carboxylated form is one of the main organic components of the bone matrix, which constitutes 1-2% of the total bone protein: it acts as a negative regulator of bone formation and is required to limit bone formation without impairing bone resorption or mineralization. The carboxylated form binds strongly to apatite and calcium.</text>
</comment>
<comment type="function">
    <text evidence="5">The uncarboxylated form acts as a hormone secreted by osteoblasts, which regulates different cellular processes, such as energy metabolism, male fertility and brain development. Regulates of energy metabolism by acting as a hormone favoring pancreatic beta-cell proliferation, insulin secretion and sensitivity and energy expenditure. Uncarboxylated osteocalcin hormone also promotes testosterone production in the testes: acts as a ligand for G protein-coupled receptor GPRC6A at the surface of Leydig cells, initiating a signaling response that promotes the expression of enzymes required for testosterone synthesis in a CREB-dependent manner. Also acts as a regulator of brain development: osteocalcin hormone crosses the blood-brain barrier and acts as a ligand for GPR158 on neurons, initiating a signaling response that prevents neuronal apoptosis in the hippocampus, favors the synthesis of all monoamine neurotransmitters and inhibits that of gamma-aminobutyric acid (GABA). Osteocalcin also crosses the placenta during pregnancy and maternal osteocalcin is required for fetal brain development.</text>
</comment>
<comment type="subcellular location">
    <subcellularLocation>
        <location evidence="5">Secreted</location>
    </subcellularLocation>
</comment>
<comment type="PTM">
    <text evidence="5 6">Gamma-carboxyglutamate residues are formed by vitamin K dependent carboxylation by GGCX. These residues are essential for the binding of calcium (By similarity). Decarboxylation promotes the hormone activity (By similarity).</text>
</comment>
<comment type="similarity">
    <text evidence="7">Belongs to the osteocalcin/matrix Gla protein family.</text>
</comment>
<feature type="signal peptide" evidence="7">
    <location>
        <begin position="1"/>
        <end position="23"/>
    </location>
</feature>
<feature type="propeptide" id="PRO_0000285414" evidence="1">
    <location>
        <begin position="24"/>
        <end position="51"/>
    </location>
</feature>
<feature type="chain" id="PRO_0000285415" description="Osteocalcin">
    <location>
        <begin position="52"/>
        <end position="100"/>
    </location>
</feature>
<feature type="domain" description="Gla" evidence="6">
    <location>
        <begin position="52"/>
        <end position="98"/>
    </location>
</feature>
<feature type="binding site" evidence="3">
    <location>
        <position position="68"/>
    </location>
    <ligand>
        <name>Ca(2+)</name>
        <dbReference type="ChEBI" id="CHEBI:29108"/>
        <label>1</label>
    </ligand>
</feature>
<feature type="binding site" evidence="3">
    <location>
        <position position="72"/>
    </location>
    <ligand>
        <name>Ca(2+)</name>
        <dbReference type="ChEBI" id="CHEBI:29108"/>
        <label>2</label>
    </ligand>
</feature>
<feature type="binding site" evidence="3">
    <location>
        <position position="75"/>
    </location>
    <ligand>
        <name>Ca(2+)</name>
        <dbReference type="ChEBI" id="CHEBI:29108"/>
        <label>2</label>
    </ligand>
</feature>
<feature type="binding site" evidence="3">
    <location>
        <position position="75"/>
    </location>
    <ligand>
        <name>Ca(2+)</name>
        <dbReference type="ChEBI" id="CHEBI:29108"/>
        <label>3</label>
    </ligand>
</feature>
<feature type="binding site" evidence="3">
    <location>
        <position position="81"/>
    </location>
    <ligand>
        <name>Ca(2+)</name>
        <dbReference type="ChEBI" id="CHEBI:29108"/>
        <label>3</label>
    </ligand>
</feature>
<feature type="modified residue" description="4-hydroxyproline" evidence="1">
    <location>
        <position position="60"/>
    </location>
</feature>
<feature type="modified residue" description="4-carboxyglutamate" evidence="2 6">
    <location>
        <position position="68"/>
    </location>
</feature>
<feature type="modified residue" description="4-carboxyglutamate" evidence="4 6">
    <location>
        <position position="72"/>
    </location>
</feature>
<feature type="modified residue" description="4-carboxyglutamate" evidence="4 6">
    <location>
        <position position="75"/>
    </location>
</feature>
<feature type="disulfide bond" evidence="6">
    <location>
        <begin position="74"/>
        <end position="80"/>
    </location>
</feature>
<sequence length="100" mass="10967">MRALTLLALLALATLCITGQAGAKPSGAESSKGAAFVSKQEGSEVVKRPRRYLYQWLGAPAPYPDPLEPKREVCELNPDCDELADHIGFQEAYRRFYGPV</sequence>
<dbReference type="EMBL" id="DQ977098">
    <property type="protein sequence ID" value="ABM88052.1"/>
    <property type="molecule type" value="Genomic_DNA"/>
</dbReference>
<dbReference type="SMR" id="A2T6K4"/>
<dbReference type="STRING" id="9545.ENSMNEP00000003200"/>
<dbReference type="Ensembl" id="ENSMNET00000016068.1">
    <property type="protein sequence ID" value="ENSMNEP00000003200.1"/>
    <property type="gene ID" value="ENSMNEG00000014728.1"/>
</dbReference>
<dbReference type="GeneID" id="105498040"/>
<dbReference type="KEGG" id="mni:105498040"/>
<dbReference type="CTD" id="105498040"/>
<dbReference type="GeneTree" id="ENSGT00410000026290"/>
<dbReference type="OMA" id="MDTEGII"/>
<dbReference type="OrthoDB" id="7828at314294"/>
<dbReference type="Proteomes" id="UP000233120">
    <property type="component" value="Unassembled WGS sequence"/>
</dbReference>
<dbReference type="Bgee" id="ENSMNEG00000014728">
    <property type="expression patterns" value="Expressed in bone marrow and 2 other cell types or tissues"/>
</dbReference>
<dbReference type="GO" id="GO:0005737">
    <property type="term" value="C:cytoplasm"/>
    <property type="evidence" value="ECO:0000250"/>
    <property type="project" value="UniProtKB"/>
</dbReference>
<dbReference type="GO" id="GO:0005576">
    <property type="term" value="C:extracellular region"/>
    <property type="evidence" value="ECO:0007669"/>
    <property type="project" value="UniProtKB-SubCell"/>
</dbReference>
<dbReference type="GO" id="GO:0005509">
    <property type="term" value="F:calcium ion binding"/>
    <property type="evidence" value="ECO:0007669"/>
    <property type="project" value="InterPro"/>
</dbReference>
<dbReference type="GO" id="GO:0005179">
    <property type="term" value="F:hormone activity"/>
    <property type="evidence" value="ECO:0000250"/>
    <property type="project" value="UniProtKB"/>
</dbReference>
<dbReference type="GO" id="GO:0046848">
    <property type="term" value="F:hydroxyapatite binding"/>
    <property type="evidence" value="ECO:0007669"/>
    <property type="project" value="TreeGrafter"/>
</dbReference>
<dbReference type="GO" id="GO:0008147">
    <property type="term" value="F:structural constituent of bone"/>
    <property type="evidence" value="ECO:0000250"/>
    <property type="project" value="UniProtKB"/>
</dbReference>
<dbReference type="GO" id="GO:0031214">
    <property type="term" value="P:biomineral tissue development"/>
    <property type="evidence" value="ECO:0007669"/>
    <property type="project" value="UniProtKB-KW"/>
</dbReference>
<dbReference type="GO" id="GO:0060348">
    <property type="term" value="P:bone development"/>
    <property type="evidence" value="ECO:0007669"/>
    <property type="project" value="InterPro"/>
</dbReference>
<dbReference type="GO" id="GO:0007420">
    <property type="term" value="P:brain development"/>
    <property type="evidence" value="ECO:0000250"/>
    <property type="project" value="UniProtKB"/>
</dbReference>
<dbReference type="GO" id="GO:0032869">
    <property type="term" value="P:cellular response to insulin stimulus"/>
    <property type="evidence" value="ECO:0000250"/>
    <property type="project" value="UniProtKB"/>
</dbReference>
<dbReference type="GO" id="GO:0050890">
    <property type="term" value="P:cognition"/>
    <property type="evidence" value="ECO:0000250"/>
    <property type="project" value="UniProtKB"/>
</dbReference>
<dbReference type="GO" id="GO:0042593">
    <property type="term" value="P:glucose homeostasis"/>
    <property type="evidence" value="ECO:0000250"/>
    <property type="project" value="UniProtKB"/>
</dbReference>
<dbReference type="GO" id="GO:0007611">
    <property type="term" value="P:learning or memory"/>
    <property type="evidence" value="ECO:0000250"/>
    <property type="project" value="UniProtKB"/>
</dbReference>
<dbReference type="GO" id="GO:1903011">
    <property type="term" value="P:negative regulation of bone development"/>
    <property type="evidence" value="ECO:0000250"/>
    <property type="project" value="UniProtKB"/>
</dbReference>
<dbReference type="GO" id="GO:0001649">
    <property type="term" value="P:osteoblast differentiation"/>
    <property type="evidence" value="ECO:0007669"/>
    <property type="project" value="Ensembl"/>
</dbReference>
<dbReference type="GO" id="GO:0001956">
    <property type="term" value="P:positive regulation of neurotransmitter secretion"/>
    <property type="evidence" value="ECO:0000250"/>
    <property type="project" value="UniProtKB"/>
</dbReference>
<dbReference type="GO" id="GO:0030500">
    <property type="term" value="P:regulation of bone mineralization"/>
    <property type="evidence" value="ECO:0007669"/>
    <property type="project" value="InterPro"/>
</dbReference>
<dbReference type="GO" id="GO:1900076">
    <property type="term" value="P:regulation of cellular response to insulin stimulus"/>
    <property type="evidence" value="ECO:0007669"/>
    <property type="project" value="InterPro"/>
</dbReference>
<dbReference type="GO" id="GO:2000224">
    <property type="term" value="P:regulation of testosterone biosynthetic process"/>
    <property type="evidence" value="ECO:0000250"/>
    <property type="project" value="UniProtKB"/>
</dbReference>
<dbReference type="GO" id="GO:0033280">
    <property type="term" value="P:response to vitamin D"/>
    <property type="evidence" value="ECO:0007669"/>
    <property type="project" value="Ensembl"/>
</dbReference>
<dbReference type="GO" id="GO:0032571">
    <property type="term" value="P:response to vitamin K"/>
    <property type="evidence" value="ECO:0007669"/>
    <property type="project" value="InterPro"/>
</dbReference>
<dbReference type="GO" id="GO:0044342">
    <property type="term" value="P:type B pancreatic cell proliferation"/>
    <property type="evidence" value="ECO:0000250"/>
    <property type="project" value="UniProtKB"/>
</dbReference>
<dbReference type="InterPro" id="IPR035972">
    <property type="entry name" value="GLA-like_dom_SF"/>
</dbReference>
<dbReference type="InterPro" id="IPR000294">
    <property type="entry name" value="GLA_domain"/>
</dbReference>
<dbReference type="InterPro" id="IPR039176">
    <property type="entry name" value="Osteocalcin"/>
</dbReference>
<dbReference type="InterPro" id="IPR002384">
    <property type="entry name" value="Osteocalcin/MGP"/>
</dbReference>
<dbReference type="PANTHER" id="PTHR14235">
    <property type="entry name" value="OSTEOCALCIN"/>
    <property type="match status" value="1"/>
</dbReference>
<dbReference type="PANTHER" id="PTHR14235:SF0">
    <property type="entry name" value="OSTEOCALCIN"/>
    <property type="match status" value="1"/>
</dbReference>
<dbReference type="PRINTS" id="PR00002">
    <property type="entry name" value="GLABONE"/>
</dbReference>
<dbReference type="SMART" id="SM00069">
    <property type="entry name" value="GLA"/>
    <property type="match status" value="1"/>
</dbReference>
<dbReference type="SUPFAM" id="SSF57630">
    <property type="entry name" value="GLA-domain"/>
    <property type="match status" value="1"/>
</dbReference>
<dbReference type="PROSITE" id="PS00011">
    <property type="entry name" value="GLA_1"/>
    <property type="match status" value="1"/>
</dbReference>
<dbReference type="PROSITE" id="PS50998">
    <property type="entry name" value="GLA_2"/>
    <property type="match status" value="1"/>
</dbReference>
<accession>A2T6K4</accession>